<protein>
    <recommendedName>
        <fullName evidence="1">Ribosomal protein L11 methyltransferase</fullName>
        <shortName evidence="1">L11 Mtase</shortName>
        <ecNumber evidence="1">2.1.1.-</ecNumber>
    </recommendedName>
</protein>
<keyword id="KW-0963">Cytoplasm</keyword>
<keyword id="KW-0489">Methyltransferase</keyword>
<keyword id="KW-0949">S-adenosyl-L-methionine</keyword>
<keyword id="KW-0808">Transferase</keyword>
<evidence type="ECO:0000255" key="1">
    <source>
        <dbReference type="HAMAP-Rule" id="MF_00735"/>
    </source>
</evidence>
<reference key="1">
    <citation type="submission" date="2006-12" db="EMBL/GenBank/DDBJ databases">
        <authorList>
            <person name="Fouts D.E."/>
            <person name="Nelson K.E."/>
            <person name="Sebastian Y."/>
        </authorList>
    </citation>
    <scope>NUCLEOTIDE SEQUENCE [LARGE SCALE GENOMIC DNA]</scope>
    <source>
        <strain>81-176</strain>
    </source>
</reference>
<gene>
    <name evidence="1" type="primary">prmA</name>
    <name type="ordered locus">CJJ81176_1135</name>
</gene>
<feature type="chain" id="PRO_1000046004" description="Ribosomal protein L11 methyltransferase">
    <location>
        <begin position="1"/>
        <end position="281"/>
    </location>
</feature>
<feature type="binding site" evidence="1">
    <location>
        <position position="133"/>
    </location>
    <ligand>
        <name>S-adenosyl-L-methionine</name>
        <dbReference type="ChEBI" id="CHEBI:59789"/>
    </ligand>
</feature>
<feature type="binding site" evidence="1">
    <location>
        <position position="154"/>
    </location>
    <ligand>
        <name>S-adenosyl-L-methionine</name>
        <dbReference type="ChEBI" id="CHEBI:59789"/>
    </ligand>
</feature>
<feature type="binding site" evidence="1">
    <location>
        <position position="175"/>
    </location>
    <ligand>
        <name>S-adenosyl-L-methionine</name>
        <dbReference type="ChEBI" id="CHEBI:59789"/>
    </ligand>
</feature>
<feature type="binding site" evidence="1">
    <location>
        <position position="216"/>
    </location>
    <ligand>
        <name>S-adenosyl-L-methionine</name>
        <dbReference type="ChEBI" id="CHEBI:59789"/>
    </ligand>
</feature>
<comment type="function">
    <text evidence="1">Methylates ribosomal protein L11.</text>
</comment>
<comment type="catalytic activity">
    <reaction evidence="1">
        <text>L-lysyl-[protein] + 3 S-adenosyl-L-methionine = N(6),N(6),N(6)-trimethyl-L-lysyl-[protein] + 3 S-adenosyl-L-homocysteine + 3 H(+)</text>
        <dbReference type="Rhea" id="RHEA:54192"/>
        <dbReference type="Rhea" id="RHEA-COMP:9752"/>
        <dbReference type="Rhea" id="RHEA-COMP:13826"/>
        <dbReference type="ChEBI" id="CHEBI:15378"/>
        <dbReference type="ChEBI" id="CHEBI:29969"/>
        <dbReference type="ChEBI" id="CHEBI:57856"/>
        <dbReference type="ChEBI" id="CHEBI:59789"/>
        <dbReference type="ChEBI" id="CHEBI:61961"/>
    </reaction>
</comment>
<comment type="subcellular location">
    <subcellularLocation>
        <location evidence="1">Cytoplasm</location>
    </subcellularLocation>
</comment>
<comment type="similarity">
    <text evidence="1">Belongs to the methyltransferase superfamily. PrmA family.</text>
</comment>
<accession>A1W0A4</accession>
<proteinExistence type="inferred from homology"/>
<name>PRMA_CAMJJ</name>
<dbReference type="EC" id="2.1.1.-" evidence="1"/>
<dbReference type="EMBL" id="CP000538">
    <property type="protein sequence ID" value="EAQ72083.1"/>
    <property type="molecule type" value="Genomic_DNA"/>
</dbReference>
<dbReference type="RefSeq" id="WP_002853953.1">
    <property type="nucleotide sequence ID" value="NC_008787.1"/>
</dbReference>
<dbReference type="SMR" id="A1W0A4"/>
<dbReference type="KEGG" id="cjj:CJJ81176_1135"/>
<dbReference type="eggNOG" id="COG2264">
    <property type="taxonomic scope" value="Bacteria"/>
</dbReference>
<dbReference type="HOGENOM" id="CLU_049382_1_0_7"/>
<dbReference type="Proteomes" id="UP000000646">
    <property type="component" value="Chromosome"/>
</dbReference>
<dbReference type="GO" id="GO:0005737">
    <property type="term" value="C:cytoplasm"/>
    <property type="evidence" value="ECO:0007669"/>
    <property type="project" value="UniProtKB-SubCell"/>
</dbReference>
<dbReference type="GO" id="GO:0016279">
    <property type="term" value="F:protein-lysine N-methyltransferase activity"/>
    <property type="evidence" value="ECO:0007669"/>
    <property type="project" value="RHEA"/>
</dbReference>
<dbReference type="GO" id="GO:0032259">
    <property type="term" value="P:methylation"/>
    <property type="evidence" value="ECO:0007669"/>
    <property type="project" value="UniProtKB-KW"/>
</dbReference>
<dbReference type="CDD" id="cd02440">
    <property type="entry name" value="AdoMet_MTases"/>
    <property type="match status" value="1"/>
</dbReference>
<dbReference type="Gene3D" id="3.40.50.150">
    <property type="entry name" value="Vaccinia Virus protein VP39"/>
    <property type="match status" value="1"/>
</dbReference>
<dbReference type="HAMAP" id="MF_00735">
    <property type="entry name" value="Methyltr_PrmA"/>
    <property type="match status" value="1"/>
</dbReference>
<dbReference type="InterPro" id="IPR050078">
    <property type="entry name" value="Ribosomal_L11_MeTrfase_PrmA"/>
</dbReference>
<dbReference type="InterPro" id="IPR004498">
    <property type="entry name" value="Ribosomal_PrmA_MeTrfase"/>
</dbReference>
<dbReference type="InterPro" id="IPR029063">
    <property type="entry name" value="SAM-dependent_MTases_sf"/>
</dbReference>
<dbReference type="NCBIfam" id="NF001786">
    <property type="entry name" value="PRK00517.2-4"/>
    <property type="match status" value="1"/>
</dbReference>
<dbReference type="PANTHER" id="PTHR43648">
    <property type="entry name" value="ELECTRON TRANSFER FLAVOPROTEIN BETA SUBUNIT LYSINE METHYLTRANSFERASE"/>
    <property type="match status" value="1"/>
</dbReference>
<dbReference type="PANTHER" id="PTHR43648:SF1">
    <property type="entry name" value="ELECTRON TRANSFER FLAVOPROTEIN BETA SUBUNIT LYSINE METHYLTRANSFERASE"/>
    <property type="match status" value="1"/>
</dbReference>
<dbReference type="Pfam" id="PF06325">
    <property type="entry name" value="PrmA"/>
    <property type="match status" value="1"/>
</dbReference>
<dbReference type="PIRSF" id="PIRSF000401">
    <property type="entry name" value="RPL11_MTase"/>
    <property type="match status" value="1"/>
</dbReference>
<dbReference type="SUPFAM" id="SSF53335">
    <property type="entry name" value="S-adenosyl-L-methionine-dependent methyltransferases"/>
    <property type="match status" value="1"/>
</dbReference>
<sequence>MQKKYYELFFIVEERYKNLFLDFAFDLGIEAIEEKDNGVYIRSHESLEDLSWALEIFAQKLTTTFNLNHKIISNLSLVEKENKDWIQEYKKGIKPILVDNVYIHTTWQEEKKNCINIKINPALAFGSGHHESTYSCVKFLQKFSKSKLRALDLGCGSGILGIIMAKFGCNVEICDTDELAIDSSLENARLNGVDFYKAWCGSIDKANGLYNLIVANIIADVILILEKDIKNHLEDNAILILSGILDKYSTRIKEKFQDLELIDEMQINEWCSFVYKNNKKG</sequence>
<organism>
    <name type="scientific">Campylobacter jejuni subsp. jejuni serotype O:23/36 (strain 81-176)</name>
    <dbReference type="NCBI Taxonomy" id="354242"/>
    <lineage>
        <taxon>Bacteria</taxon>
        <taxon>Pseudomonadati</taxon>
        <taxon>Campylobacterota</taxon>
        <taxon>Epsilonproteobacteria</taxon>
        <taxon>Campylobacterales</taxon>
        <taxon>Campylobacteraceae</taxon>
        <taxon>Campylobacter</taxon>
    </lineage>
</organism>